<evidence type="ECO:0000255" key="1">
    <source>
        <dbReference type="HAMAP-Rule" id="MF_01859"/>
    </source>
</evidence>
<protein>
    <recommendedName>
        <fullName evidence="1">Ribosomal RNA large subunit methyltransferase G</fullName>
        <ecNumber evidence="1">2.1.1.174</ecNumber>
    </recommendedName>
    <alternativeName>
        <fullName evidence="1">23S rRNA m2G1835 methyltransferase</fullName>
    </alternativeName>
    <alternativeName>
        <fullName evidence="1">rRNA (guanine-N(2)-)-methyltransferase RlmG</fullName>
    </alternativeName>
</protein>
<reference key="1">
    <citation type="journal article" date="2011" name="J. Bacteriol.">
        <title>Comparative genomics of 28 Salmonella enterica isolates: evidence for CRISPR-mediated adaptive sublineage evolution.</title>
        <authorList>
            <person name="Fricke W.F."/>
            <person name="Mammel M.K."/>
            <person name="McDermott P.F."/>
            <person name="Tartera C."/>
            <person name="White D.G."/>
            <person name="Leclerc J.E."/>
            <person name="Ravel J."/>
            <person name="Cebula T.A."/>
        </authorList>
    </citation>
    <scope>NUCLEOTIDE SEQUENCE [LARGE SCALE GENOMIC DNA]</scope>
    <source>
        <strain>SL483</strain>
    </source>
</reference>
<accession>B5F6B6</accession>
<feature type="chain" id="PRO_0000366489" description="Ribosomal RNA large subunit methyltransferase G">
    <location>
        <begin position="1"/>
        <end position="378"/>
    </location>
</feature>
<comment type="function">
    <text evidence="1">Specifically methylates the guanine in position 1835 (m2G1835) of 23S rRNA.</text>
</comment>
<comment type="catalytic activity">
    <reaction evidence="1">
        <text>guanosine(1835) in 23S rRNA + S-adenosyl-L-methionine = N(2)-methylguanosine(1835) in 23S rRNA + S-adenosyl-L-homocysteine + H(+)</text>
        <dbReference type="Rhea" id="RHEA:42744"/>
        <dbReference type="Rhea" id="RHEA-COMP:10217"/>
        <dbReference type="Rhea" id="RHEA-COMP:10218"/>
        <dbReference type="ChEBI" id="CHEBI:15378"/>
        <dbReference type="ChEBI" id="CHEBI:57856"/>
        <dbReference type="ChEBI" id="CHEBI:59789"/>
        <dbReference type="ChEBI" id="CHEBI:74269"/>
        <dbReference type="ChEBI" id="CHEBI:74481"/>
        <dbReference type="EC" id="2.1.1.174"/>
    </reaction>
</comment>
<comment type="subcellular location">
    <subcellularLocation>
        <location evidence="1">Cytoplasm</location>
    </subcellularLocation>
</comment>
<comment type="similarity">
    <text evidence="1">Belongs to the methyltransferase superfamily. RlmG family.</text>
</comment>
<dbReference type="EC" id="2.1.1.174" evidence="1"/>
<dbReference type="EMBL" id="CP001138">
    <property type="protein sequence ID" value="ACH49642.1"/>
    <property type="molecule type" value="Genomic_DNA"/>
</dbReference>
<dbReference type="RefSeq" id="WP_000019985.1">
    <property type="nucleotide sequence ID" value="NC_011149.1"/>
</dbReference>
<dbReference type="SMR" id="B5F6B6"/>
<dbReference type="KEGG" id="sea:SeAg_B3407"/>
<dbReference type="HOGENOM" id="CLU_040288_4_0_6"/>
<dbReference type="Proteomes" id="UP000008819">
    <property type="component" value="Chromosome"/>
</dbReference>
<dbReference type="GO" id="GO:0005737">
    <property type="term" value="C:cytoplasm"/>
    <property type="evidence" value="ECO:0007669"/>
    <property type="project" value="UniProtKB-SubCell"/>
</dbReference>
<dbReference type="GO" id="GO:0052916">
    <property type="term" value="F:23S rRNA (guanine(1835)-N(2))-methyltransferase activity"/>
    <property type="evidence" value="ECO:0007669"/>
    <property type="project" value="UniProtKB-EC"/>
</dbReference>
<dbReference type="GO" id="GO:0003676">
    <property type="term" value="F:nucleic acid binding"/>
    <property type="evidence" value="ECO:0007669"/>
    <property type="project" value="InterPro"/>
</dbReference>
<dbReference type="CDD" id="cd02440">
    <property type="entry name" value="AdoMet_MTases"/>
    <property type="match status" value="1"/>
</dbReference>
<dbReference type="FunFam" id="3.40.50.150:FF:000046">
    <property type="entry name" value="Ribosomal RNA large subunit methyltransferase G"/>
    <property type="match status" value="1"/>
</dbReference>
<dbReference type="FunFam" id="3.40.50.150:FF:000047">
    <property type="entry name" value="Ribosomal RNA large subunit methyltransferase G"/>
    <property type="match status" value="1"/>
</dbReference>
<dbReference type="Gene3D" id="3.40.50.150">
    <property type="entry name" value="Vaccinia Virus protein VP39"/>
    <property type="match status" value="2"/>
</dbReference>
<dbReference type="HAMAP" id="MF_01859">
    <property type="entry name" value="23SrRNA_methyltr_G"/>
    <property type="match status" value="1"/>
</dbReference>
<dbReference type="InterPro" id="IPR002052">
    <property type="entry name" value="DNA_methylase_N6_adenine_CS"/>
</dbReference>
<dbReference type="InterPro" id="IPR017237">
    <property type="entry name" value="rRNA_m2G-MeTrfase_RlmG"/>
</dbReference>
<dbReference type="InterPro" id="IPR046977">
    <property type="entry name" value="RsmC/RlmG"/>
</dbReference>
<dbReference type="InterPro" id="IPR029063">
    <property type="entry name" value="SAM-dependent_MTases_sf"/>
</dbReference>
<dbReference type="InterPro" id="IPR007848">
    <property type="entry name" value="Small_mtfrase_dom"/>
</dbReference>
<dbReference type="NCBIfam" id="NF011577">
    <property type="entry name" value="PRK15001.1"/>
    <property type="match status" value="1"/>
</dbReference>
<dbReference type="PANTHER" id="PTHR47816:SF5">
    <property type="entry name" value="RIBOSOMAL RNA LARGE SUBUNIT METHYLTRANSFERASE G"/>
    <property type="match status" value="1"/>
</dbReference>
<dbReference type="PANTHER" id="PTHR47816">
    <property type="entry name" value="RIBOSOMAL RNA SMALL SUBUNIT METHYLTRANSFERASE C"/>
    <property type="match status" value="1"/>
</dbReference>
<dbReference type="Pfam" id="PF05175">
    <property type="entry name" value="MTS"/>
    <property type="match status" value="1"/>
</dbReference>
<dbReference type="PIRSF" id="PIRSF037565">
    <property type="entry name" value="RRNA_m2G_Mtase_RsmD_prd"/>
    <property type="match status" value="1"/>
</dbReference>
<dbReference type="SUPFAM" id="SSF53335">
    <property type="entry name" value="S-adenosyl-L-methionine-dependent methyltransferases"/>
    <property type="match status" value="1"/>
</dbReference>
<gene>
    <name evidence="1" type="primary">rlmG</name>
    <name type="ordered locus">SeAg_B3407</name>
</gene>
<organism>
    <name type="scientific">Salmonella agona (strain SL483)</name>
    <dbReference type="NCBI Taxonomy" id="454166"/>
    <lineage>
        <taxon>Bacteria</taxon>
        <taxon>Pseudomonadati</taxon>
        <taxon>Pseudomonadota</taxon>
        <taxon>Gammaproteobacteria</taxon>
        <taxon>Enterobacterales</taxon>
        <taxon>Enterobacteriaceae</taxon>
        <taxon>Salmonella</taxon>
    </lineage>
</organism>
<proteinExistence type="inferred from homology"/>
<sequence length="378" mass="42286">MSHVDDGFRSLTLKRFPQTDDVNPLLAWEAADEYLLQQLDETEIRGPVLILNDTFGALSCALAEHSPYSIGDSYLSELGTRENLRHNGIAESSVTFLDSTADYPQAPGVVLIKVPKTLALLEQQLRALRKVVTAQTRIIAGAKARDIHTSTLELFEKVLGPTTTTLAWKKARLINCTFSHPQLADAPQTLSWKLEDTGWTIHNHANVFSRTGLDIGARFFMQHLPENLDGEIVDLGCGNGVIGLSLLAKNPQAKVVFVDESPMAVDSSRLNVETNLPEAFERCEFMINNALSGVEPFRFNAVFCNPPFHQKHALTDNIAWEMFHHARRCLKINGELYIVANRHLDYFHKLKKIFGNCATIATNNKFVILKAVKQGRRR</sequence>
<keyword id="KW-0963">Cytoplasm</keyword>
<keyword id="KW-0489">Methyltransferase</keyword>
<keyword id="KW-0698">rRNA processing</keyword>
<keyword id="KW-0949">S-adenosyl-L-methionine</keyword>
<keyword id="KW-0808">Transferase</keyword>
<name>RLMG_SALA4</name>